<sequence>MLQDWCRRMGVNAERSLLILDIPDDCEEHEFQEAVRAALSPLGRYRVLIKVFRKELGARAALVEFAEGLNQSLIPRQIAGKGGPWKVISLPQALDAEFQDIPSFPAQPQGQAVARGAGEAGAAGEAGSVGEAGGVNEERSAGEDEAGGIGEAGGVGEAGAAGEAGAAGEAGAAGEAGGAGEAGGAGEAGGAGEEGGTGEEGGAGEAGGAGEEGGEDEAGAAGEAVGAGVVEAWTQSWRQTLRPLVKTMAYRELRPFSGREQPGCVEESFESWLEDAKDMLQLWCHASERERRRRLLDSLDGLALDIVSGLLEEDPDFSAQDCLTALGQVFRSRDTWMTSRMKFLTCTQGPQEGLFAFVVRLEGLLQKAVEKGAVHPAMANHLRLRQVLSRARPSEALQDTLRRMQLERRPPDFLRLLRLIRDMEAWAASLARSQQGVAWAAAPVESEDPAAAQASPAQGDASEADPGAEDADEAASTTKEAARVAPATGEDENAPAGLEGLGQGRSPDAPGGLPARMGSAVDMAPGGPSWEPEGLVQVGGQEAEEPPQEGLKPILEESENEDEDGAGEAGKPKSPPGK</sequence>
<evidence type="ECO:0000256" key="1">
    <source>
        <dbReference type="SAM" id="MobiDB-lite"/>
    </source>
</evidence>
<evidence type="ECO:0000312" key="2">
    <source>
        <dbReference type="HGNC" id="HGNC:53119"/>
    </source>
</evidence>
<dbReference type="EMBL" id="AC152008">
    <property type="status" value="NOT_ANNOTATED_CDS"/>
    <property type="molecule type" value="Genomic_DNA"/>
</dbReference>
<dbReference type="EMBL" id="AC152009">
    <property type="status" value="NOT_ANNOTATED_CDS"/>
    <property type="molecule type" value="Genomic_DNA"/>
</dbReference>
<dbReference type="CCDS" id="CCDS87792.1"/>
<dbReference type="RefSeq" id="NP_001341909.1">
    <property type="nucleotide sequence ID" value="NM_001354980.2"/>
</dbReference>
<dbReference type="RefSeq" id="XP_016855433.1">
    <property type="nucleotide sequence ID" value="XM_016999944.1"/>
</dbReference>
<dbReference type="RefSeq" id="XP_016885513.1">
    <property type="nucleotide sequence ID" value="XM_017030024.1"/>
</dbReference>
<dbReference type="SMR" id="A0A0J9YX94"/>
<dbReference type="STRING" id="9606.ENSP00000488302"/>
<dbReference type="BioMuta" id="PNMA6F"/>
<dbReference type="MassIVE" id="A0A0J9YX94"/>
<dbReference type="PeptideAtlas" id="A0A0J9YX94"/>
<dbReference type="Ensembl" id="ENST00000436629.3">
    <property type="protein sequence ID" value="ENSP00000488302.1"/>
    <property type="gene ID" value="ENSG00000225110.3"/>
</dbReference>
<dbReference type="GeneID" id="105373377"/>
<dbReference type="MANE-Select" id="ENST00000436629.3">
    <property type="protein sequence ID" value="ENSP00000488302.1"/>
    <property type="RefSeq nucleotide sequence ID" value="NM_001354980.2"/>
    <property type="RefSeq protein sequence ID" value="NP_001341909.1"/>
</dbReference>
<dbReference type="AGR" id="HGNC:53119"/>
<dbReference type="GeneCards" id="PNMA6F"/>
<dbReference type="HGNC" id="HGNC:53119">
    <property type="gene designation" value="PNMA6F"/>
</dbReference>
<dbReference type="HPA" id="ENSG00000225110">
    <property type="expression patterns" value="Tissue enriched (brain)"/>
</dbReference>
<dbReference type="neXtProt" id="NX_A0A0J9YX94"/>
<dbReference type="OpenTargets" id="ENSG00000225110"/>
<dbReference type="VEuPathDB" id="HostDB:ENSG00000225110"/>
<dbReference type="GeneTree" id="ENSGT01030000234522"/>
<dbReference type="InParanoid" id="A0A0J9YX94"/>
<dbReference type="OMA" id="EAWTQSW"/>
<dbReference type="OrthoDB" id="115435at2759"/>
<dbReference type="PAN-GO" id="A0A0J9YX94">
    <property type="GO annotations" value="0 GO annotations based on evolutionary models"/>
</dbReference>
<dbReference type="BioGRID-ORCS" id="105373377">
    <property type="hits" value="0 hits in 2 CRISPR screens"/>
</dbReference>
<dbReference type="GenomeRNAi" id="105373377"/>
<dbReference type="Pharos" id="A0A0J9YX94">
    <property type="development level" value="Tdark"/>
</dbReference>
<dbReference type="PRO" id="PR:A0A0J9YX94"/>
<dbReference type="Proteomes" id="UP000005640">
    <property type="component" value="Chromosome X"/>
</dbReference>
<dbReference type="RNAct" id="A0A0J9YX94">
    <property type="molecule type" value="protein"/>
</dbReference>
<dbReference type="Bgee" id="ENSG00000225110">
    <property type="expression patterns" value="Expressed in hypothalamus and 30 other cell types or tissues"/>
</dbReference>
<dbReference type="InterPro" id="IPR026523">
    <property type="entry name" value="PNMA"/>
</dbReference>
<dbReference type="InterPro" id="IPR048270">
    <property type="entry name" value="PNMA_C"/>
</dbReference>
<dbReference type="InterPro" id="IPR048271">
    <property type="entry name" value="PNMA_N"/>
</dbReference>
<dbReference type="PANTHER" id="PTHR23095">
    <property type="entry name" value="PARANEOPLASTIC ANTIGEN"/>
    <property type="match status" value="1"/>
</dbReference>
<dbReference type="PANTHER" id="PTHR23095:SF49">
    <property type="entry name" value="PARANEOPLASTIC ANTIGEN MA6F"/>
    <property type="match status" value="1"/>
</dbReference>
<dbReference type="Pfam" id="PF14893">
    <property type="entry name" value="PNMA"/>
    <property type="match status" value="1"/>
</dbReference>
<dbReference type="Pfam" id="PF20846">
    <property type="entry name" value="PNMA_N"/>
    <property type="match status" value="1"/>
</dbReference>
<proteinExistence type="evidence at protein level"/>
<gene>
    <name evidence="2" type="primary">PNMA6F</name>
    <name evidence="2" type="synonym">PNMA6BL</name>
</gene>
<name>PMA6F_HUMAN</name>
<keyword id="KW-1267">Proteomics identification</keyword>
<keyword id="KW-1185">Reference proteome</keyword>
<accession>A0A0J9YX94</accession>
<reference key="1">
    <citation type="journal article" date="2005" name="Nature">
        <title>The DNA sequence of the human X chromosome.</title>
        <authorList>
            <person name="Ross M.T."/>
            <person name="Grafham D.V."/>
            <person name="Coffey A.J."/>
            <person name="Scherer S."/>
            <person name="McLay K."/>
            <person name="Muzny D."/>
            <person name="Platzer M."/>
            <person name="Howell G.R."/>
            <person name="Burrows C."/>
            <person name="Bird C.P."/>
            <person name="Frankish A."/>
            <person name="Lovell F.L."/>
            <person name="Howe K.L."/>
            <person name="Ashurst J.L."/>
            <person name="Fulton R.S."/>
            <person name="Sudbrak R."/>
            <person name="Wen G."/>
            <person name="Jones M.C."/>
            <person name="Hurles M.E."/>
            <person name="Andrews T.D."/>
            <person name="Scott C.E."/>
            <person name="Searle S."/>
            <person name="Ramser J."/>
            <person name="Whittaker A."/>
            <person name="Deadman R."/>
            <person name="Carter N.P."/>
            <person name="Hunt S.E."/>
            <person name="Chen R."/>
            <person name="Cree A."/>
            <person name="Gunaratne P."/>
            <person name="Havlak P."/>
            <person name="Hodgson A."/>
            <person name="Metzker M.L."/>
            <person name="Richards S."/>
            <person name="Scott G."/>
            <person name="Steffen D."/>
            <person name="Sodergren E."/>
            <person name="Wheeler D.A."/>
            <person name="Worley K.C."/>
            <person name="Ainscough R."/>
            <person name="Ambrose K.D."/>
            <person name="Ansari-Lari M.A."/>
            <person name="Aradhya S."/>
            <person name="Ashwell R.I."/>
            <person name="Babbage A.K."/>
            <person name="Bagguley C.L."/>
            <person name="Ballabio A."/>
            <person name="Banerjee R."/>
            <person name="Barker G.E."/>
            <person name="Barlow K.F."/>
            <person name="Barrett I.P."/>
            <person name="Bates K.N."/>
            <person name="Beare D.M."/>
            <person name="Beasley H."/>
            <person name="Beasley O."/>
            <person name="Beck A."/>
            <person name="Bethel G."/>
            <person name="Blechschmidt K."/>
            <person name="Brady N."/>
            <person name="Bray-Allen S."/>
            <person name="Bridgeman A.M."/>
            <person name="Brown A.J."/>
            <person name="Brown M.J."/>
            <person name="Bonnin D."/>
            <person name="Bruford E.A."/>
            <person name="Buhay C."/>
            <person name="Burch P."/>
            <person name="Burford D."/>
            <person name="Burgess J."/>
            <person name="Burrill W."/>
            <person name="Burton J."/>
            <person name="Bye J.M."/>
            <person name="Carder C."/>
            <person name="Carrel L."/>
            <person name="Chako J."/>
            <person name="Chapman J.C."/>
            <person name="Chavez D."/>
            <person name="Chen E."/>
            <person name="Chen G."/>
            <person name="Chen Y."/>
            <person name="Chen Z."/>
            <person name="Chinault C."/>
            <person name="Ciccodicola A."/>
            <person name="Clark S.Y."/>
            <person name="Clarke G."/>
            <person name="Clee C.M."/>
            <person name="Clegg S."/>
            <person name="Clerc-Blankenburg K."/>
            <person name="Clifford K."/>
            <person name="Cobley V."/>
            <person name="Cole C.G."/>
            <person name="Conquer J.S."/>
            <person name="Corby N."/>
            <person name="Connor R.E."/>
            <person name="David R."/>
            <person name="Davies J."/>
            <person name="Davis C."/>
            <person name="Davis J."/>
            <person name="Delgado O."/>
            <person name="Deshazo D."/>
            <person name="Dhami P."/>
            <person name="Ding Y."/>
            <person name="Dinh H."/>
            <person name="Dodsworth S."/>
            <person name="Draper H."/>
            <person name="Dugan-Rocha S."/>
            <person name="Dunham A."/>
            <person name="Dunn M."/>
            <person name="Durbin K.J."/>
            <person name="Dutta I."/>
            <person name="Eades T."/>
            <person name="Ellwood M."/>
            <person name="Emery-Cohen A."/>
            <person name="Errington H."/>
            <person name="Evans K.L."/>
            <person name="Faulkner L."/>
            <person name="Francis F."/>
            <person name="Frankland J."/>
            <person name="Fraser A.E."/>
            <person name="Galgoczy P."/>
            <person name="Gilbert J."/>
            <person name="Gill R."/>
            <person name="Gloeckner G."/>
            <person name="Gregory S.G."/>
            <person name="Gribble S."/>
            <person name="Griffiths C."/>
            <person name="Grocock R."/>
            <person name="Gu Y."/>
            <person name="Gwilliam R."/>
            <person name="Hamilton C."/>
            <person name="Hart E.A."/>
            <person name="Hawes A."/>
            <person name="Heath P.D."/>
            <person name="Heitmann K."/>
            <person name="Hennig S."/>
            <person name="Hernandez J."/>
            <person name="Hinzmann B."/>
            <person name="Ho S."/>
            <person name="Hoffs M."/>
            <person name="Howden P.J."/>
            <person name="Huckle E.J."/>
            <person name="Hume J."/>
            <person name="Hunt P.J."/>
            <person name="Hunt A.R."/>
            <person name="Isherwood J."/>
            <person name="Jacob L."/>
            <person name="Johnson D."/>
            <person name="Jones S."/>
            <person name="de Jong P.J."/>
            <person name="Joseph S.S."/>
            <person name="Keenan S."/>
            <person name="Kelly S."/>
            <person name="Kershaw J.K."/>
            <person name="Khan Z."/>
            <person name="Kioschis P."/>
            <person name="Klages S."/>
            <person name="Knights A.J."/>
            <person name="Kosiura A."/>
            <person name="Kovar-Smith C."/>
            <person name="Laird G.K."/>
            <person name="Langford C."/>
            <person name="Lawlor S."/>
            <person name="Leversha M."/>
            <person name="Lewis L."/>
            <person name="Liu W."/>
            <person name="Lloyd C."/>
            <person name="Lloyd D.M."/>
            <person name="Loulseged H."/>
            <person name="Loveland J.E."/>
            <person name="Lovell J.D."/>
            <person name="Lozado R."/>
            <person name="Lu J."/>
            <person name="Lyne R."/>
            <person name="Ma J."/>
            <person name="Maheshwari M."/>
            <person name="Matthews L.H."/>
            <person name="McDowall J."/>
            <person name="McLaren S."/>
            <person name="McMurray A."/>
            <person name="Meidl P."/>
            <person name="Meitinger T."/>
            <person name="Milne S."/>
            <person name="Miner G."/>
            <person name="Mistry S.L."/>
            <person name="Morgan M."/>
            <person name="Morris S."/>
            <person name="Mueller I."/>
            <person name="Mullikin J.C."/>
            <person name="Nguyen N."/>
            <person name="Nordsiek G."/>
            <person name="Nyakatura G."/>
            <person name="O'dell C.N."/>
            <person name="Okwuonu G."/>
            <person name="Palmer S."/>
            <person name="Pandian R."/>
            <person name="Parker D."/>
            <person name="Parrish J."/>
            <person name="Pasternak S."/>
            <person name="Patel D."/>
            <person name="Pearce A.V."/>
            <person name="Pearson D.M."/>
            <person name="Pelan S.E."/>
            <person name="Perez L."/>
            <person name="Porter K.M."/>
            <person name="Ramsey Y."/>
            <person name="Reichwald K."/>
            <person name="Rhodes S."/>
            <person name="Ridler K.A."/>
            <person name="Schlessinger D."/>
            <person name="Schueler M.G."/>
            <person name="Sehra H.K."/>
            <person name="Shaw-Smith C."/>
            <person name="Shen H."/>
            <person name="Sheridan E.M."/>
            <person name="Shownkeen R."/>
            <person name="Skuce C.D."/>
            <person name="Smith M.L."/>
            <person name="Sotheran E.C."/>
            <person name="Steingruber H.E."/>
            <person name="Steward C.A."/>
            <person name="Storey R."/>
            <person name="Swann R.M."/>
            <person name="Swarbreck D."/>
            <person name="Tabor P.E."/>
            <person name="Taudien S."/>
            <person name="Taylor T."/>
            <person name="Teague B."/>
            <person name="Thomas K."/>
            <person name="Thorpe A."/>
            <person name="Timms K."/>
            <person name="Tracey A."/>
            <person name="Trevanion S."/>
            <person name="Tromans A.C."/>
            <person name="d'Urso M."/>
            <person name="Verduzco D."/>
            <person name="Villasana D."/>
            <person name="Waldron L."/>
            <person name="Wall M."/>
            <person name="Wang Q."/>
            <person name="Warren J."/>
            <person name="Warry G.L."/>
            <person name="Wei X."/>
            <person name="West A."/>
            <person name="Whitehead S.L."/>
            <person name="Whiteley M.N."/>
            <person name="Wilkinson J.E."/>
            <person name="Willey D.L."/>
            <person name="Williams G."/>
            <person name="Williams L."/>
            <person name="Williamson A."/>
            <person name="Williamson H."/>
            <person name="Wilming L."/>
            <person name="Woodmansey R.L."/>
            <person name="Wray P.W."/>
            <person name="Yen J."/>
            <person name="Zhang J."/>
            <person name="Zhou J."/>
            <person name="Zoghbi H."/>
            <person name="Zorilla S."/>
            <person name="Buck D."/>
            <person name="Reinhardt R."/>
            <person name="Poustka A."/>
            <person name="Rosenthal A."/>
            <person name="Lehrach H."/>
            <person name="Meindl A."/>
            <person name="Minx P.J."/>
            <person name="Hillier L.W."/>
            <person name="Willard H.F."/>
            <person name="Wilson R.K."/>
            <person name="Waterston R.H."/>
            <person name="Rice C.M."/>
            <person name="Vaudin M."/>
            <person name="Coulson A."/>
            <person name="Nelson D.L."/>
            <person name="Weinstock G."/>
            <person name="Sulston J.E."/>
            <person name="Durbin R.M."/>
            <person name="Hubbard T."/>
            <person name="Gibbs R.A."/>
            <person name="Beck S."/>
            <person name="Rogers J."/>
            <person name="Bentley D.R."/>
        </authorList>
    </citation>
    <scope>NUCLEOTIDE SEQUENCE [LARGE SCALE GENOMIC DNA]</scope>
</reference>
<protein>
    <recommendedName>
        <fullName evidence="2">Paraneoplastic antigen Ma6F</fullName>
    </recommendedName>
</protein>
<organism>
    <name type="scientific">Homo sapiens</name>
    <name type="common">Human</name>
    <dbReference type="NCBI Taxonomy" id="9606"/>
    <lineage>
        <taxon>Eukaryota</taxon>
        <taxon>Metazoa</taxon>
        <taxon>Chordata</taxon>
        <taxon>Craniata</taxon>
        <taxon>Vertebrata</taxon>
        <taxon>Euteleostomi</taxon>
        <taxon>Mammalia</taxon>
        <taxon>Eutheria</taxon>
        <taxon>Euarchontoglires</taxon>
        <taxon>Primates</taxon>
        <taxon>Haplorrhini</taxon>
        <taxon>Catarrhini</taxon>
        <taxon>Hominidae</taxon>
        <taxon>Homo</taxon>
    </lineage>
</organism>
<feature type="chain" id="PRO_0000440655" description="Paraneoplastic antigen Ma6F">
    <location>
        <begin position="1"/>
        <end position="578"/>
    </location>
</feature>
<feature type="region of interest" description="Disordered" evidence="1">
    <location>
        <begin position="106"/>
        <end position="221"/>
    </location>
</feature>
<feature type="region of interest" description="Disordered" evidence="1">
    <location>
        <begin position="441"/>
        <end position="578"/>
    </location>
</feature>
<feature type="compositionally biased region" description="Low complexity" evidence="1">
    <location>
        <begin position="112"/>
        <end position="129"/>
    </location>
</feature>
<feature type="compositionally biased region" description="Gly residues" evidence="1">
    <location>
        <begin position="147"/>
        <end position="159"/>
    </location>
</feature>
<feature type="compositionally biased region" description="Low complexity" evidence="1">
    <location>
        <begin position="160"/>
        <end position="173"/>
    </location>
</feature>
<feature type="compositionally biased region" description="Gly residues" evidence="1">
    <location>
        <begin position="174"/>
        <end position="211"/>
    </location>
</feature>
<feature type="compositionally biased region" description="Low complexity" evidence="1">
    <location>
        <begin position="449"/>
        <end position="461"/>
    </location>
</feature>
<feature type="compositionally biased region" description="Acidic residues" evidence="1">
    <location>
        <begin position="462"/>
        <end position="473"/>
    </location>
</feature>
<feature type="compositionally biased region" description="Acidic residues" evidence="1">
    <location>
        <begin position="556"/>
        <end position="566"/>
    </location>
</feature>